<sequence>MTIAIGKSSKQPQGLFDSMDDWLRRDRFVFVGWSGLLLFPCAYFALGGWLTGTTFVTSWYTHGLASSYLEGCNFLTAAVSTPANSLAHSLLLLWGPEAQGDFTRWCQLGGLWAFVAFHGAFGLIGFMLRQFEIARSVGLRPYNAIAFTGPIAVFVSVFLIYPLGQSGWFFAPSFGVAAIFRFILFFQGFHNWTLNPFHMMGVAGVLGAALLCAIHGATVENTIFEDGDGANTFRAFNPTQSEETYSMVTANRFWSQIFGVAFANKRWLHFFMLFVPVTGLWMSAIGVVGLALNLRAYDFVSQEIRAAEDPEFETFYTKNILLNEGIRAWMAAQDQPHENLVFPEEVLPRGNAL</sequence>
<feature type="initiator methionine" description="Removed" evidence="1">
    <location>
        <position position="1"/>
    </location>
</feature>
<feature type="chain" id="PRO_0000359697" description="Photosystem II D2 protein">
    <location>
        <begin position="2"/>
        <end position="353"/>
    </location>
</feature>
<feature type="transmembrane region" description="Helical" evidence="2">
    <location>
        <begin position="41"/>
        <end position="61"/>
    </location>
</feature>
<feature type="transmembrane region" description="Helical" evidence="2">
    <location>
        <begin position="125"/>
        <end position="141"/>
    </location>
</feature>
<feature type="transmembrane region" description="Helical" evidence="2">
    <location>
        <begin position="153"/>
        <end position="166"/>
    </location>
</feature>
<feature type="transmembrane region" description="Helical" evidence="2">
    <location>
        <begin position="208"/>
        <end position="228"/>
    </location>
</feature>
<feature type="transmembrane region" description="Helical" evidence="2">
    <location>
        <begin position="279"/>
        <end position="295"/>
    </location>
</feature>
<feature type="binding site" description="axial binding residue" evidence="2">
    <location>
        <position position="118"/>
    </location>
    <ligand>
        <name>chlorophyll a</name>
        <dbReference type="ChEBI" id="CHEBI:58416"/>
        <label>ChlzD2</label>
    </ligand>
    <ligandPart>
        <name>Mg</name>
        <dbReference type="ChEBI" id="CHEBI:25107"/>
    </ligandPart>
</feature>
<feature type="binding site" evidence="2">
    <location>
        <position position="130"/>
    </location>
    <ligand>
        <name>pheophytin a</name>
        <dbReference type="ChEBI" id="CHEBI:136840"/>
        <label>D2</label>
    </ligand>
</feature>
<feature type="binding site" evidence="2">
    <location>
        <position position="143"/>
    </location>
    <ligand>
        <name>pheophytin a</name>
        <dbReference type="ChEBI" id="CHEBI:136840"/>
        <label>D2</label>
    </ligand>
</feature>
<feature type="binding site" description="axial binding residue" evidence="2">
    <location>
        <position position="198"/>
    </location>
    <ligand>
        <name>chlorophyll a</name>
        <dbReference type="ChEBI" id="CHEBI:58416"/>
        <label>PD2</label>
    </ligand>
    <ligandPart>
        <name>Mg</name>
        <dbReference type="ChEBI" id="CHEBI:25107"/>
    </ligandPart>
</feature>
<feature type="binding site" evidence="2">
    <location>
        <position position="215"/>
    </location>
    <ligand>
        <name>a plastoquinone</name>
        <dbReference type="ChEBI" id="CHEBI:17757"/>
        <label>Q(A)</label>
    </ligand>
</feature>
<feature type="binding site" evidence="2">
    <location>
        <position position="215"/>
    </location>
    <ligand>
        <name>Fe cation</name>
        <dbReference type="ChEBI" id="CHEBI:24875"/>
        <note>ligand shared with heterodimeric partner</note>
    </ligand>
</feature>
<feature type="binding site" evidence="2">
    <location>
        <position position="262"/>
    </location>
    <ligand>
        <name>a plastoquinone</name>
        <dbReference type="ChEBI" id="CHEBI:17757"/>
        <label>Q(A)</label>
    </ligand>
</feature>
<feature type="binding site" evidence="2">
    <location>
        <position position="269"/>
    </location>
    <ligand>
        <name>Fe cation</name>
        <dbReference type="ChEBI" id="CHEBI:24875"/>
        <note>ligand shared with heterodimeric partner</note>
    </ligand>
</feature>
<feature type="modified residue" description="N-acetylthreonine" evidence="1">
    <location>
        <position position="2"/>
    </location>
</feature>
<feature type="modified residue" description="Phosphothreonine" evidence="1">
    <location>
        <position position="2"/>
    </location>
</feature>
<name>PSBD_STAPU</name>
<dbReference type="EC" id="1.10.3.9" evidence="2"/>
<dbReference type="EMBL" id="AY958085">
    <property type="protein sequence ID" value="AAX45724.1"/>
    <property type="molecule type" value="Genomic_DNA"/>
</dbReference>
<dbReference type="RefSeq" id="YP_636446.1">
    <property type="nucleotide sequence ID" value="NC_008116.1"/>
</dbReference>
<dbReference type="SMR" id="Q32RT0"/>
<dbReference type="GeneID" id="4108683"/>
<dbReference type="GO" id="GO:0009535">
    <property type="term" value="C:chloroplast thylakoid membrane"/>
    <property type="evidence" value="ECO:0007669"/>
    <property type="project" value="UniProtKB-SubCell"/>
</dbReference>
<dbReference type="GO" id="GO:0009523">
    <property type="term" value="C:photosystem II"/>
    <property type="evidence" value="ECO:0007669"/>
    <property type="project" value="UniProtKB-KW"/>
</dbReference>
<dbReference type="GO" id="GO:0016168">
    <property type="term" value="F:chlorophyll binding"/>
    <property type="evidence" value="ECO:0007669"/>
    <property type="project" value="UniProtKB-UniRule"/>
</dbReference>
<dbReference type="GO" id="GO:0045156">
    <property type="term" value="F:electron transporter, transferring electrons within the cyclic electron transport pathway of photosynthesis activity"/>
    <property type="evidence" value="ECO:0007669"/>
    <property type="project" value="InterPro"/>
</dbReference>
<dbReference type="GO" id="GO:0005506">
    <property type="term" value="F:iron ion binding"/>
    <property type="evidence" value="ECO:0007669"/>
    <property type="project" value="UniProtKB-UniRule"/>
</dbReference>
<dbReference type="GO" id="GO:0010242">
    <property type="term" value="F:oxygen evolving activity"/>
    <property type="evidence" value="ECO:0007669"/>
    <property type="project" value="UniProtKB-EC"/>
</dbReference>
<dbReference type="GO" id="GO:0009772">
    <property type="term" value="P:photosynthetic electron transport in photosystem II"/>
    <property type="evidence" value="ECO:0007669"/>
    <property type="project" value="InterPro"/>
</dbReference>
<dbReference type="CDD" id="cd09288">
    <property type="entry name" value="Photosystem-II_D2"/>
    <property type="match status" value="1"/>
</dbReference>
<dbReference type="FunFam" id="1.20.85.10:FF:000001">
    <property type="entry name" value="photosystem II D2 protein-like"/>
    <property type="match status" value="1"/>
</dbReference>
<dbReference type="Gene3D" id="1.20.85.10">
    <property type="entry name" value="Photosystem II protein D1-like"/>
    <property type="match status" value="1"/>
</dbReference>
<dbReference type="HAMAP" id="MF_01383">
    <property type="entry name" value="PSII_PsbD_D2"/>
    <property type="match status" value="1"/>
</dbReference>
<dbReference type="InterPro" id="IPR055266">
    <property type="entry name" value="D1/D2"/>
</dbReference>
<dbReference type="InterPro" id="IPR036854">
    <property type="entry name" value="Photo_II_D1/D2_sf"/>
</dbReference>
<dbReference type="InterPro" id="IPR000484">
    <property type="entry name" value="Photo_RC_L/M"/>
</dbReference>
<dbReference type="InterPro" id="IPR055265">
    <property type="entry name" value="Photo_RC_L/M_CS"/>
</dbReference>
<dbReference type="InterPro" id="IPR005868">
    <property type="entry name" value="PSII_PsbD/D2"/>
</dbReference>
<dbReference type="NCBIfam" id="TIGR01152">
    <property type="entry name" value="psbD"/>
    <property type="match status" value="1"/>
</dbReference>
<dbReference type="PANTHER" id="PTHR33149:SF12">
    <property type="entry name" value="PHOTOSYSTEM II D2 PROTEIN"/>
    <property type="match status" value="1"/>
</dbReference>
<dbReference type="PANTHER" id="PTHR33149">
    <property type="entry name" value="PHOTOSYSTEM II PROTEIN D1"/>
    <property type="match status" value="1"/>
</dbReference>
<dbReference type="Pfam" id="PF00124">
    <property type="entry name" value="Photo_RC"/>
    <property type="match status" value="1"/>
</dbReference>
<dbReference type="PRINTS" id="PR00256">
    <property type="entry name" value="REACTNCENTRE"/>
</dbReference>
<dbReference type="SUPFAM" id="SSF81483">
    <property type="entry name" value="Bacterial photosystem II reaction centre, L and M subunits"/>
    <property type="match status" value="1"/>
</dbReference>
<dbReference type="PROSITE" id="PS00244">
    <property type="entry name" value="REACTION_CENTER"/>
    <property type="match status" value="1"/>
</dbReference>
<geneLocation type="chloroplast"/>
<proteinExistence type="inferred from homology"/>
<accession>Q32RT0</accession>
<evidence type="ECO:0000250" key="1">
    <source>
        <dbReference type="UniProtKB" id="P56761"/>
    </source>
</evidence>
<evidence type="ECO:0000255" key="2">
    <source>
        <dbReference type="HAMAP-Rule" id="MF_01383"/>
    </source>
</evidence>
<reference key="1">
    <citation type="journal article" date="2005" name="BMC Biol.">
        <title>The complete chloroplast DNA sequences of the charophycean green algae Staurastrum and Zygnema reveal that the chloroplast genome underwent extensive changes during the evolution of the Zygnematales.</title>
        <authorList>
            <person name="Turmel M."/>
            <person name="Otis C."/>
            <person name="Lemieux C."/>
        </authorList>
    </citation>
    <scope>NUCLEOTIDE SEQUENCE [LARGE SCALE GENOMIC DNA]</scope>
</reference>
<gene>
    <name evidence="2" type="primary">psbD</name>
</gene>
<keyword id="KW-0007">Acetylation</keyword>
<keyword id="KW-0148">Chlorophyll</keyword>
<keyword id="KW-0150">Chloroplast</keyword>
<keyword id="KW-0157">Chromophore</keyword>
<keyword id="KW-0249">Electron transport</keyword>
<keyword id="KW-0408">Iron</keyword>
<keyword id="KW-0460">Magnesium</keyword>
<keyword id="KW-0472">Membrane</keyword>
<keyword id="KW-0479">Metal-binding</keyword>
<keyword id="KW-0560">Oxidoreductase</keyword>
<keyword id="KW-0597">Phosphoprotein</keyword>
<keyword id="KW-0602">Photosynthesis</keyword>
<keyword id="KW-0604">Photosystem II</keyword>
<keyword id="KW-0934">Plastid</keyword>
<keyword id="KW-0793">Thylakoid</keyword>
<keyword id="KW-0812">Transmembrane</keyword>
<keyword id="KW-1133">Transmembrane helix</keyword>
<keyword id="KW-0813">Transport</keyword>
<comment type="function">
    <text evidence="2">Photosystem II (PSII) is a light-driven water:plastoquinone oxidoreductase that uses light energy to abstract electrons from H(2)O, generating O(2) and a proton gradient subsequently used for ATP formation. It consists of a core antenna complex that captures photons, and an electron transfer chain that converts photonic excitation into a charge separation. The D1/D2 (PsbA/PsbD) reaction center heterodimer binds P680, the primary electron donor of PSII as well as several subsequent electron acceptors. D2 is needed for assembly of a stable PSII complex.</text>
</comment>
<comment type="catalytic activity">
    <reaction evidence="2">
        <text>2 a plastoquinone + 4 hnu + 2 H2O = 2 a plastoquinol + O2</text>
        <dbReference type="Rhea" id="RHEA:36359"/>
        <dbReference type="Rhea" id="RHEA-COMP:9561"/>
        <dbReference type="Rhea" id="RHEA-COMP:9562"/>
        <dbReference type="ChEBI" id="CHEBI:15377"/>
        <dbReference type="ChEBI" id="CHEBI:15379"/>
        <dbReference type="ChEBI" id="CHEBI:17757"/>
        <dbReference type="ChEBI" id="CHEBI:30212"/>
        <dbReference type="ChEBI" id="CHEBI:62192"/>
        <dbReference type="EC" id="1.10.3.9"/>
    </reaction>
</comment>
<comment type="cofactor">
    <text evidence="2">The D1/D2 heterodimer binds P680, chlorophylls that are the primary electron donor of PSII, and subsequent electron acceptors. It shares a non-heme iron and each subunit binds pheophytin, quinone, additional chlorophylls, carotenoids and lipids. There is also a Cl(-1) ion associated with D1 and D2, which is required for oxygen evolution. The PSII complex binds additional chlorophylls, carotenoids and specific lipids.</text>
</comment>
<comment type="subunit">
    <text evidence="2">PSII is composed of 1 copy each of membrane proteins PsbA, PsbB, PsbC, PsbD, PsbE, PsbF, PsbH, PsbI, PsbJ, PsbK, PsbL, PsbM, PsbT, PsbX, PsbY, PsbZ, Psb30/Ycf12, at least 3 peripheral proteins of the oxygen-evolving complex and a large number of cofactors. It forms dimeric complexes.</text>
</comment>
<comment type="subcellular location">
    <subcellularLocation>
        <location evidence="2">Plastid</location>
        <location evidence="2">Chloroplast thylakoid membrane</location>
        <topology evidence="2">Multi-pass membrane protein</topology>
    </subcellularLocation>
</comment>
<comment type="miscellaneous">
    <text evidence="2">2 of the reaction center chlorophylls (ChlD1 and ChlD2) are entirely coordinated by water.</text>
</comment>
<comment type="similarity">
    <text evidence="2">Belongs to the reaction center PufL/M/PsbA/D family.</text>
</comment>
<protein>
    <recommendedName>
        <fullName evidence="2">Photosystem II D2 protein</fullName>
        <shortName evidence="2">PSII D2 protein</shortName>
        <ecNumber evidence="2">1.10.3.9</ecNumber>
    </recommendedName>
    <alternativeName>
        <fullName evidence="2">Photosystem Q(A) protein</fullName>
    </alternativeName>
</protein>
<organism>
    <name type="scientific">Staurastrum punctulatum</name>
    <name type="common">Green alga</name>
    <name type="synonym">Cosmoastrum punctulatum</name>
    <dbReference type="NCBI Taxonomy" id="102822"/>
    <lineage>
        <taxon>Eukaryota</taxon>
        <taxon>Viridiplantae</taxon>
        <taxon>Streptophyta</taxon>
        <taxon>Zygnematophyceae</taxon>
        <taxon>Zygnematophycidae</taxon>
        <taxon>Desmidiales</taxon>
        <taxon>Desmidiaceae</taxon>
        <taxon>Staurastrum</taxon>
    </lineage>
</organism>